<proteinExistence type="inferred from homology"/>
<protein>
    <recommendedName>
        <fullName evidence="1">D-aminoacyl-tRNA deacylase</fullName>
        <shortName evidence="1">DTD</shortName>
        <ecNumber evidence="1">3.1.1.96</ecNumber>
    </recommendedName>
    <alternativeName>
        <fullName evidence="1">Gly-tRNA(Ala) deacylase</fullName>
    </alternativeName>
</protein>
<gene>
    <name evidence="1" type="primary">dtd</name>
    <name type="ordered locus">BURPS1710b_3411</name>
</gene>
<name>DTD_BURP1</name>
<accession>Q3JNS1</accession>
<feature type="chain" id="PRO_0000259265" description="D-aminoacyl-tRNA deacylase">
    <location>
        <begin position="1"/>
        <end position="152"/>
    </location>
</feature>
<feature type="short sequence motif" description="Gly-cisPro motif, important for rejection of L-amino acids" evidence="1">
    <location>
        <begin position="142"/>
        <end position="143"/>
    </location>
</feature>
<evidence type="ECO:0000255" key="1">
    <source>
        <dbReference type="HAMAP-Rule" id="MF_00518"/>
    </source>
</evidence>
<evidence type="ECO:0000305" key="2"/>
<keyword id="KW-0963">Cytoplasm</keyword>
<keyword id="KW-0378">Hydrolase</keyword>
<keyword id="KW-0694">RNA-binding</keyword>
<keyword id="KW-0820">tRNA-binding</keyword>
<comment type="function">
    <text evidence="1">An aminoacyl-tRNA editing enzyme that deacylates mischarged D-aminoacyl-tRNAs. Also deacylates mischarged glycyl-tRNA(Ala), protecting cells against glycine mischarging by AlaRS. Acts via tRNA-based rather than protein-based catalysis; rejects L-amino acids rather than detecting D-amino acids in the active site. By recycling D-aminoacyl-tRNA to D-amino acids and free tRNA molecules, this enzyme counteracts the toxicity associated with the formation of D-aminoacyl-tRNA entities in vivo and helps enforce protein L-homochirality.</text>
</comment>
<comment type="catalytic activity">
    <reaction evidence="1">
        <text>glycyl-tRNA(Ala) + H2O = tRNA(Ala) + glycine + H(+)</text>
        <dbReference type="Rhea" id="RHEA:53744"/>
        <dbReference type="Rhea" id="RHEA-COMP:9657"/>
        <dbReference type="Rhea" id="RHEA-COMP:13640"/>
        <dbReference type="ChEBI" id="CHEBI:15377"/>
        <dbReference type="ChEBI" id="CHEBI:15378"/>
        <dbReference type="ChEBI" id="CHEBI:57305"/>
        <dbReference type="ChEBI" id="CHEBI:78442"/>
        <dbReference type="ChEBI" id="CHEBI:78522"/>
        <dbReference type="EC" id="3.1.1.96"/>
    </reaction>
</comment>
<comment type="catalytic activity">
    <reaction evidence="1">
        <text>a D-aminoacyl-tRNA + H2O = a tRNA + a D-alpha-amino acid + H(+)</text>
        <dbReference type="Rhea" id="RHEA:13953"/>
        <dbReference type="Rhea" id="RHEA-COMP:10123"/>
        <dbReference type="Rhea" id="RHEA-COMP:10124"/>
        <dbReference type="ChEBI" id="CHEBI:15377"/>
        <dbReference type="ChEBI" id="CHEBI:15378"/>
        <dbReference type="ChEBI" id="CHEBI:59871"/>
        <dbReference type="ChEBI" id="CHEBI:78442"/>
        <dbReference type="ChEBI" id="CHEBI:79333"/>
        <dbReference type="EC" id="3.1.1.96"/>
    </reaction>
</comment>
<comment type="subunit">
    <text evidence="1">Homodimer.</text>
</comment>
<comment type="subcellular location">
    <subcellularLocation>
        <location evidence="1">Cytoplasm</location>
    </subcellularLocation>
</comment>
<comment type="domain">
    <text evidence="1">A Gly-cisPro motif from one monomer fits into the active site of the other monomer to allow specific chiral rejection of L-amino acids.</text>
</comment>
<comment type="similarity">
    <text evidence="1">Belongs to the DTD family.</text>
</comment>
<comment type="sequence caution" evidence="2">
    <conflict type="erroneous initiation">
        <sequence resource="EMBL-CDS" id="ABA50606"/>
    </conflict>
    <text>Extended N-terminus.</text>
</comment>
<reference key="1">
    <citation type="journal article" date="2010" name="Genome Biol. Evol.">
        <title>Continuing evolution of Burkholderia mallei through genome reduction and large-scale rearrangements.</title>
        <authorList>
            <person name="Losada L."/>
            <person name="Ronning C.M."/>
            <person name="DeShazer D."/>
            <person name="Woods D."/>
            <person name="Fedorova N."/>
            <person name="Kim H.S."/>
            <person name="Shabalina S.A."/>
            <person name="Pearson T.R."/>
            <person name="Brinkac L."/>
            <person name="Tan P."/>
            <person name="Nandi T."/>
            <person name="Crabtree J."/>
            <person name="Badger J."/>
            <person name="Beckstrom-Sternberg S."/>
            <person name="Saqib M."/>
            <person name="Schutzer S.E."/>
            <person name="Keim P."/>
            <person name="Nierman W.C."/>
        </authorList>
    </citation>
    <scope>NUCLEOTIDE SEQUENCE [LARGE SCALE GENOMIC DNA]</scope>
    <source>
        <strain>1710b</strain>
    </source>
</reference>
<sequence>MIALIQRVKRADVRVGERVTGEIGPGLLALVCAERGDTEAAADKLLAKVLGYRVFSDAAGKMNLPVSNLDGAGRAGGLLLVSQFTLAADTNSGLRPSFTPAAPPDEGERLFDYFVRRARERHPIVATGEFGADMQVSLVNDGPVTFWLQTRA</sequence>
<dbReference type="EC" id="3.1.1.96" evidence="1"/>
<dbReference type="EMBL" id="CP000124">
    <property type="protein sequence ID" value="ABA50606.1"/>
    <property type="status" value="ALT_INIT"/>
    <property type="molecule type" value="Genomic_DNA"/>
</dbReference>
<dbReference type="RefSeq" id="WP_004200499.1">
    <property type="nucleotide sequence ID" value="NC_007434.1"/>
</dbReference>
<dbReference type="SMR" id="Q3JNS1"/>
<dbReference type="EnsemblBacteria" id="ABA50606">
    <property type="protein sequence ID" value="ABA50606"/>
    <property type="gene ID" value="BURPS1710b_3411"/>
</dbReference>
<dbReference type="GeneID" id="93061498"/>
<dbReference type="KEGG" id="bpm:BURPS1710b_3411"/>
<dbReference type="HOGENOM" id="CLU_076901_1_1_4"/>
<dbReference type="Proteomes" id="UP000002700">
    <property type="component" value="Chromosome I"/>
</dbReference>
<dbReference type="GO" id="GO:0005737">
    <property type="term" value="C:cytoplasm"/>
    <property type="evidence" value="ECO:0007669"/>
    <property type="project" value="UniProtKB-SubCell"/>
</dbReference>
<dbReference type="GO" id="GO:0051500">
    <property type="term" value="F:D-tyrosyl-tRNA(Tyr) deacylase activity"/>
    <property type="evidence" value="ECO:0007669"/>
    <property type="project" value="TreeGrafter"/>
</dbReference>
<dbReference type="GO" id="GO:0106026">
    <property type="term" value="F:Gly-tRNA(Ala) deacylase activity"/>
    <property type="evidence" value="ECO:0007669"/>
    <property type="project" value="UniProtKB-UniRule"/>
</dbReference>
<dbReference type="GO" id="GO:0043908">
    <property type="term" value="F:Ser(Gly)-tRNA(Ala) hydrolase activity"/>
    <property type="evidence" value="ECO:0007669"/>
    <property type="project" value="UniProtKB-UniRule"/>
</dbReference>
<dbReference type="GO" id="GO:0000049">
    <property type="term" value="F:tRNA binding"/>
    <property type="evidence" value="ECO:0007669"/>
    <property type="project" value="UniProtKB-UniRule"/>
</dbReference>
<dbReference type="GO" id="GO:0019478">
    <property type="term" value="P:D-amino acid catabolic process"/>
    <property type="evidence" value="ECO:0007669"/>
    <property type="project" value="UniProtKB-UniRule"/>
</dbReference>
<dbReference type="CDD" id="cd00563">
    <property type="entry name" value="Dtyr_deacylase"/>
    <property type="match status" value="1"/>
</dbReference>
<dbReference type="FunFam" id="3.50.80.10:FF:000001">
    <property type="entry name" value="D-aminoacyl-tRNA deacylase"/>
    <property type="match status" value="1"/>
</dbReference>
<dbReference type="Gene3D" id="3.50.80.10">
    <property type="entry name" value="D-tyrosyl-tRNA(Tyr) deacylase"/>
    <property type="match status" value="1"/>
</dbReference>
<dbReference type="HAMAP" id="MF_00518">
    <property type="entry name" value="Deacylase_Dtd"/>
    <property type="match status" value="1"/>
</dbReference>
<dbReference type="InterPro" id="IPR003732">
    <property type="entry name" value="Daa-tRNA_deacyls_DTD"/>
</dbReference>
<dbReference type="InterPro" id="IPR023509">
    <property type="entry name" value="DTD-like_sf"/>
</dbReference>
<dbReference type="NCBIfam" id="TIGR00256">
    <property type="entry name" value="D-aminoacyl-tRNA deacylase"/>
    <property type="match status" value="1"/>
</dbReference>
<dbReference type="PANTHER" id="PTHR10472:SF5">
    <property type="entry name" value="D-AMINOACYL-TRNA DEACYLASE 1"/>
    <property type="match status" value="1"/>
</dbReference>
<dbReference type="PANTHER" id="PTHR10472">
    <property type="entry name" value="D-TYROSYL-TRNA TYR DEACYLASE"/>
    <property type="match status" value="1"/>
</dbReference>
<dbReference type="Pfam" id="PF02580">
    <property type="entry name" value="Tyr_Deacylase"/>
    <property type="match status" value="1"/>
</dbReference>
<dbReference type="SUPFAM" id="SSF69500">
    <property type="entry name" value="DTD-like"/>
    <property type="match status" value="1"/>
</dbReference>
<organism>
    <name type="scientific">Burkholderia pseudomallei (strain 1710b)</name>
    <dbReference type="NCBI Taxonomy" id="320372"/>
    <lineage>
        <taxon>Bacteria</taxon>
        <taxon>Pseudomonadati</taxon>
        <taxon>Pseudomonadota</taxon>
        <taxon>Betaproteobacteria</taxon>
        <taxon>Burkholderiales</taxon>
        <taxon>Burkholderiaceae</taxon>
        <taxon>Burkholderia</taxon>
        <taxon>pseudomallei group</taxon>
    </lineage>
</organism>